<protein>
    <recommendedName>
        <fullName>Ferredoxin</fullName>
    </recommendedName>
</protein>
<keyword id="KW-0003">3Fe-4S</keyword>
<keyword id="KW-0004">4Fe-4S</keyword>
<keyword id="KW-0249">Electron transport</keyword>
<keyword id="KW-0408">Iron</keyword>
<keyword id="KW-0411">Iron-sulfur</keyword>
<keyword id="KW-0479">Metal-binding</keyword>
<keyword id="KW-0677">Repeat</keyword>
<keyword id="KW-0813">Transport</keyword>
<organism>
    <name type="scientific">Rickettsia conorii (strain ATCC VR-613 / Malish 7)</name>
    <dbReference type="NCBI Taxonomy" id="272944"/>
    <lineage>
        <taxon>Bacteria</taxon>
        <taxon>Pseudomonadati</taxon>
        <taxon>Pseudomonadota</taxon>
        <taxon>Alphaproteobacteria</taxon>
        <taxon>Rickettsiales</taxon>
        <taxon>Rickettsiaceae</taxon>
        <taxon>Rickettsieae</taxon>
        <taxon>Rickettsia</taxon>
        <taxon>spotted fever group</taxon>
    </lineage>
</organism>
<sequence>MTYVVTDECVKCKYTDCVEVCPVDCFYEGEREDDFMLVINPDECIDCGVCVPDCPIGAIKPESPGLIEWVERAKDFIENKGWKNITKKKTALPDADKFKDEKDKFNKYIGSVKIAN</sequence>
<evidence type="ECO:0000250" key="1"/>
<evidence type="ECO:0000255" key="2">
    <source>
        <dbReference type="PROSITE-ProRule" id="PRU00711"/>
    </source>
</evidence>
<feature type="initiator methionine" description="Removed" evidence="1">
    <location>
        <position position="1"/>
    </location>
</feature>
<feature type="chain" id="PRO_0000280963" description="Ferredoxin">
    <location>
        <begin position="2"/>
        <end position="116"/>
    </location>
</feature>
<feature type="domain" description="4Fe-4S ferredoxin-type 1" evidence="2">
    <location>
        <begin position="2"/>
        <end position="31"/>
    </location>
</feature>
<feature type="domain" description="4Fe-4S ferredoxin-type 2" evidence="2">
    <location>
        <begin position="35"/>
        <end position="64"/>
    </location>
</feature>
<feature type="binding site" evidence="1">
    <location>
        <position position="9"/>
    </location>
    <ligand>
        <name>[3Fe-4S] cluster</name>
        <dbReference type="ChEBI" id="CHEBI:21137"/>
    </ligand>
</feature>
<feature type="binding site" evidence="1">
    <location>
        <position position="17"/>
    </location>
    <ligand>
        <name>[3Fe-4S] cluster</name>
        <dbReference type="ChEBI" id="CHEBI:21137"/>
    </ligand>
</feature>
<feature type="binding site" evidence="1">
    <location>
        <position position="21"/>
    </location>
    <ligand>
        <name>[4Fe-4S] cluster</name>
        <dbReference type="ChEBI" id="CHEBI:49883"/>
    </ligand>
</feature>
<feature type="binding site" evidence="1">
    <location>
        <position position="44"/>
    </location>
    <ligand>
        <name>[4Fe-4S] cluster</name>
        <dbReference type="ChEBI" id="CHEBI:49883"/>
    </ligand>
</feature>
<feature type="binding site" evidence="1">
    <location>
        <position position="47"/>
    </location>
    <ligand>
        <name>[4Fe-4S] cluster</name>
        <dbReference type="ChEBI" id="CHEBI:49883"/>
    </ligand>
</feature>
<feature type="binding site" evidence="1">
    <location>
        <position position="50"/>
    </location>
    <ligand>
        <name>[4Fe-4S] cluster</name>
        <dbReference type="ChEBI" id="CHEBI:49883"/>
    </ligand>
</feature>
<feature type="binding site" evidence="1">
    <location>
        <position position="54"/>
    </location>
    <ligand>
        <name>[3Fe-4S] cluster</name>
        <dbReference type="ChEBI" id="CHEBI:21137"/>
    </ligand>
</feature>
<comment type="function">
    <text evidence="1">Ferredoxins are iron-sulfur proteins that transfer electrons in a wide variety of metabolic reactions.</text>
</comment>
<comment type="cofactor">
    <cofactor evidence="1">
        <name>[4Fe-4S] cluster</name>
        <dbReference type="ChEBI" id="CHEBI:49883"/>
    </cofactor>
    <text evidence="1">Binds 1 [4Fe-4S] cluster.</text>
</comment>
<comment type="cofactor">
    <cofactor evidence="1">
        <name>[3Fe-4S] cluster</name>
        <dbReference type="ChEBI" id="CHEBI:21137"/>
    </cofactor>
    <text evidence="1">Binds 1 [3Fe-4S] cluster.</text>
</comment>
<dbReference type="EMBL" id="AE006914">
    <property type="protein sequence ID" value="AAL03821.1"/>
    <property type="molecule type" value="Genomic_DNA"/>
</dbReference>
<dbReference type="PIR" id="C97860">
    <property type="entry name" value="C97860"/>
</dbReference>
<dbReference type="RefSeq" id="WP_010977845.1">
    <property type="nucleotide sequence ID" value="NC_003103.1"/>
</dbReference>
<dbReference type="SMR" id="Q92G41"/>
<dbReference type="GeneID" id="928431"/>
<dbReference type="KEGG" id="rco:RC1283"/>
<dbReference type="PATRIC" id="fig|272944.4.peg.1475"/>
<dbReference type="HOGENOM" id="CLU_139698_0_0_5"/>
<dbReference type="Proteomes" id="UP000000816">
    <property type="component" value="Chromosome"/>
</dbReference>
<dbReference type="GO" id="GO:0051538">
    <property type="term" value="F:3 iron, 4 sulfur cluster binding"/>
    <property type="evidence" value="ECO:0007669"/>
    <property type="project" value="UniProtKB-KW"/>
</dbReference>
<dbReference type="GO" id="GO:0051539">
    <property type="term" value="F:4 iron, 4 sulfur cluster binding"/>
    <property type="evidence" value="ECO:0007669"/>
    <property type="project" value="UniProtKB-KW"/>
</dbReference>
<dbReference type="GO" id="GO:0009055">
    <property type="term" value="F:electron transfer activity"/>
    <property type="evidence" value="ECO:0007669"/>
    <property type="project" value="InterPro"/>
</dbReference>
<dbReference type="GO" id="GO:0046872">
    <property type="term" value="F:metal ion binding"/>
    <property type="evidence" value="ECO:0007669"/>
    <property type="project" value="UniProtKB-KW"/>
</dbReference>
<dbReference type="Gene3D" id="3.30.70.20">
    <property type="match status" value="1"/>
</dbReference>
<dbReference type="InterPro" id="IPR017896">
    <property type="entry name" value="4Fe4S_Fe-S-bd"/>
</dbReference>
<dbReference type="InterPro" id="IPR017900">
    <property type="entry name" value="4Fe4S_Fe_S_CS"/>
</dbReference>
<dbReference type="InterPro" id="IPR000813">
    <property type="entry name" value="7Fe_ferredoxin"/>
</dbReference>
<dbReference type="InterPro" id="IPR022569">
    <property type="entry name" value="Fd_C"/>
</dbReference>
<dbReference type="InterPro" id="IPR050294">
    <property type="entry name" value="RnfB_subfamily"/>
</dbReference>
<dbReference type="PANTHER" id="PTHR42859:SF2">
    <property type="entry name" value="FERREDOXIN"/>
    <property type="match status" value="1"/>
</dbReference>
<dbReference type="PANTHER" id="PTHR42859">
    <property type="entry name" value="OXIDOREDUCTASE"/>
    <property type="match status" value="1"/>
</dbReference>
<dbReference type="Pfam" id="PF11953">
    <property type="entry name" value="DUF3470"/>
    <property type="match status" value="1"/>
</dbReference>
<dbReference type="Pfam" id="PF12838">
    <property type="entry name" value="Fer4_7"/>
    <property type="match status" value="1"/>
</dbReference>
<dbReference type="PRINTS" id="PR00354">
    <property type="entry name" value="7FE8SFRDOXIN"/>
</dbReference>
<dbReference type="SUPFAM" id="SSF54862">
    <property type="entry name" value="4Fe-4S ferredoxins"/>
    <property type="match status" value="1"/>
</dbReference>
<dbReference type="PROSITE" id="PS00198">
    <property type="entry name" value="4FE4S_FER_1"/>
    <property type="match status" value="1"/>
</dbReference>
<dbReference type="PROSITE" id="PS51379">
    <property type="entry name" value="4FE4S_FER_2"/>
    <property type="match status" value="2"/>
</dbReference>
<proteinExistence type="inferred from homology"/>
<reference key="1">
    <citation type="journal article" date="2001" name="Science">
        <title>Mechanisms of evolution in Rickettsia conorii and R. prowazekii.</title>
        <authorList>
            <person name="Ogata H."/>
            <person name="Audic S."/>
            <person name="Renesto-Audiffren P."/>
            <person name="Fournier P.-E."/>
            <person name="Barbe V."/>
            <person name="Samson D."/>
            <person name="Roux V."/>
            <person name="Cossart P."/>
            <person name="Weissenbach J."/>
            <person name="Claverie J.-M."/>
            <person name="Raoult D."/>
        </authorList>
    </citation>
    <scope>NUCLEOTIDE SEQUENCE [LARGE SCALE GENOMIC DNA]</scope>
    <source>
        <strain>ATCC VR-613 / Malish 7</strain>
    </source>
</reference>
<gene>
    <name type="primary">fdxA</name>
    <name type="ordered locus">RC1283</name>
</gene>
<name>FER_RICCN</name>
<accession>Q92G41</accession>